<reference key="1">
    <citation type="journal article" date="2007" name="J. Med. Genet.">
        <title>Congenital ichthyosis: mutations in ichthyin are associated with specific structural abnormalities in the granular layer of epidermis.</title>
        <authorList>
            <person name="Dahlqvist J."/>
            <person name="Klar J."/>
            <person name="Hausser I."/>
            <person name="Anton-Lamprecht I."/>
            <person name="Pigg M.H."/>
            <person name="Gedde-Dahl T."/>
            <person name="Gaanemo A."/>
            <person name="Vahlquist A."/>
            <person name="Dahl N."/>
        </authorList>
    </citation>
    <scope>NUCLEOTIDE SEQUENCE [GENOMIC DNA] (ISOFORM 1)</scope>
    <scope>TISSUE SPECIFICITY</scope>
    <scope>VARIANTS ARCI6 ASP-114 AND ARG-168</scope>
</reference>
<reference key="2">
    <citation type="journal article" date="2004" name="Nat. Genet.">
        <title>Complete sequencing and characterization of 21,243 full-length human cDNAs.</title>
        <authorList>
            <person name="Ota T."/>
            <person name="Suzuki Y."/>
            <person name="Nishikawa T."/>
            <person name="Otsuki T."/>
            <person name="Sugiyama T."/>
            <person name="Irie R."/>
            <person name="Wakamatsu A."/>
            <person name="Hayashi K."/>
            <person name="Sato H."/>
            <person name="Nagai K."/>
            <person name="Kimura K."/>
            <person name="Makita H."/>
            <person name="Sekine M."/>
            <person name="Obayashi M."/>
            <person name="Nishi T."/>
            <person name="Shibahara T."/>
            <person name="Tanaka T."/>
            <person name="Ishii S."/>
            <person name="Yamamoto J."/>
            <person name="Saito K."/>
            <person name="Kawai Y."/>
            <person name="Isono Y."/>
            <person name="Nakamura Y."/>
            <person name="Nagahari K."/>
            <person name="Murakami K."/>
            <person name="Yasuda T."/>
            <person name="Iwayanagi T."/>
            <person name="Wagatsuma M."/>
            <person name="Shiratori A."/>
            <person name="Sudo H."/>
            <person name="Hosoiri T."/>
            <person name="Kaku Y."/>
            <person name="Kodaira H."/>
            <person name="Kondo H."/>
            <person name="Sugawara M."/>
            <person name="Takahashi M."/>
            <person name="Kanda K."/>
            <person name="Yokoi T."/>
            <person name="Furuya T."/>
            <person name="Kikkawa E."/>
            <person name="Omura Y."/>
            <person name="Abe K."/>
            <person name="Kamihara K."/>
            <person name="Katsuta N."/>
            <person name="Sato K."/>
            <person name="Tanikawa M."/>
            <person name="Yamazaki M."/>
            <person name="Ninomiya K."/>
            <person name="Ishibashi T."/>
            <person name="Yamashita H."/>
            <person name="Murakawa K."/>
            <person name="Fujimori K."/>
            <person name="Tanai H."/>
            <person name="Kimata M."/>
            <person name="Watanabe M."/>
            <person name="Hiraoka S."/>
            <person name="Chiba Y."/>
            <person name="Ishida S."/>
            <person name="Ono Y."/>
            <person name="Takiguchi S."/>
            <person name="Watanabe S."/>
            <person name="Yosida M."/>
            <person name="Hotuta T."/>
            <person name="Kusano J."/>
            <person name="Kanehori K."/>
            <person name="Takahashi-Fujii A."/>
            <person name="Hara H."/>
            <person name="Tanase T.-O."/>
            <person name="Nomura Y."/>
            <person name="Togiya S."/>
            <person name="Komai F."/>
            <person name="Hara R."/>
            <person name="Takeuchi K."/>
            <person name="Arita M."/>
            <person name="Imose N."/>
            <person name="Musashino K."/>
            <person name="Yuuki H."/>
            <person name="Oshima A."/>
            <person name="Sasaki N."/>
            <person name="Aotsuka S."/>
            <person name="Yoshikawa Y."/>
            <person name="Matsunawa H."/>
            <person name="Ichihara T."/>
            <person name="Shiohata N."/>
            <person name="Sano S."/>
            <person name="Moriya S."/>
            <person name="Momiyama H."/>
            <person name="Satoh N."/>
            <person name="Takami S."/>
            <person name="Terashima Y."/>
            <person name="Suzuki O."/>
            <person name="Nakagawa S."/>
            <person name="Senoh A."/>
            <person name="Mizoguchi H."/>
            <person name="Goto Y."/>
            <person name="Shimizu F."/>
            <person name="Wakebe H."/>
            <person name="Hishigaki H."/>
            <person name="Watanabe T."/>
            <person name="Sugiyama A."/>
            <person name="Takemoto M."/>
            <person name="Kawakami B."/>
            <person name="Yamazaki M."/>
            <person name="Watanabe K."/>
            <person name="Kumagai A."/>
            <person name="Itakura S."/>
            <person name="Fukuzumi Y."/>
            <person name="Fujimori Y."/>
            <person name="Komiyama M."/>
            <person name="Tashiro H."/>
            <person name="Tanigami A."/>
            <person name="Fujiwara T."/>
            <person name="Ono T."/>
            <person name="Yamada K."/>
            <person name="Fujii Y."/>
            <person name="Ozaki K."/>
            <person name="Hirao M."/>
            <person name="Ohmori Y."/>
            <person name="Kawabata A."/>
            <person name="Hikiji T."/>
            <person name="Kobatake N."/>
            <person name="Inagaki H."/>
            <person name="Ikema Y."/>
            <person name="Okamoto S."/>
            <person name="Okitani R."/>
            <person name="Kawakami T."/>
            <person name="Noguchi S."/>
            <person name="Itoh T."/>
            <person name="Shigeta K."/>
            <person name="Senba T."/>
            <person name="Matsumura K."/>
            <person name="Nakajima Y."/>
            <person name="Mizuno T."/>
            <person name="Morinaga M."/>
            <person name="Sasaki M."/>
            <person name="Togashi T."/>
            <person name="Oyama M."/>
            <person name="Hata H."/>
            <person name="Watanabe M."/>
            <person name="Komatsu T."/>
            <person name="Mizushima-Sugano J."/>
            <person name="Satoh T."/>
            <person name="Shirai Y."/>
            <person name="Takahashi Y."/>
            <person name="Nakagawa K."/>
            <person name="Okumura K."/>
            <person name="Nagase T."/>
            <person name="Nomura N."/>
            <person name="Kikuchi H."/>
            <person name="Masuho Y."/>
            <person name="Yamashita R."/>
            <person name="Nakai K."/>
            <person name="Yada T."/>
            <person name="Nakamura Y."/>
            <person name="Ohara O."/>
            <person name="Isogai T."/>
            <person name="Sugano S."/>
        </authorList>
    </citation>
    <scope>NUCLEOTIDE SEQUENCE [LARGE SCALE MRNA] (ISOFORM 2)</scope>
    <source>
        <tissue>Tongue</tissue>
    </source>
</reference>
<reference key="3">
    <citation type="journal article" date="2004" name="Nature">
        <title>The DNA sequence and comparative analysis of human chromosome 5.</title>
        <authorList>
            <person name="Schmutz J."/>
            <person name="Martin J."/>
            <person name="Terry A."/>
            <person name="Couronne O."/>
            <person name="Grimwood J."/>
            <person name="Lowry S."/>
            <person name="Gordon L.A."/>
            <person name="Scott D."/>
            <person name="Xie G."/>
            <person name="Huang W."/>
            <person name="Hellsten U."/>
            <person name="Tran-Gyamfi M."/>
            <person name="She X."/>
            <person name="Prabhakar S."/>
            <person name="Aerts A."/>
            <person name="Altherr M."/>
            <person name="Bajorek E."/>
            <person name="Black S."/>
            <person name="Branscomb E."/>
            <person name="Caoile C."/>
            <person name="Challacombe J.F."/>
            <person name="Chan Y.M."/>
            <person name="Denys M."/>
            <person name="Detter J.C."/>
            <person name="Escobar J."/>
            <person name="Flowers D."/>
            <person name="Fotopulos D."/>
            <person name="Glavina T."/>
            <person name="Gomez M."/>
            <person name="Gonzales E."/>
            <person name="Goodstein D."/>
            <person name="Grigoriev I."/>
            <person name="Groza M."/>
            <person name="Hammon N."/>
            <person name="Hawkins T."/>
            <person name="Haydu L."/>
            <person name="Israni S."/>
            <person name="Jett J."/>
            <person name="Kadner K."/>
            <person name="Kimball H."/>
            <person name="Kobayashi A."/>
            <person name="Lopez F."/>
            <person name="Lou Y."/>
            <person name="Martinez D."/>
            <person name="Medina C."/>
            <person name="Morgan J."/>
            <person name="Nandkeshwar R."/>
            <person name="Noonan J.P."/>
            <person name="Pitluck S."/>
            <person name="Pollard M."/>
            <person name="Predki P."/>
            <person name="Priest J."/>
            <person name="Ramirez L."/>
            <person name="Retterer J."/>
            <person name="Rodriguez A."/>
            <person name="Rogers S."/>
            <person name="Salamov A."/>
            <person name="Salazar A."/>
            <person name="Thayer N."/>
            <person name="Tice H."/>
            <person name="Tsai M."/>
            <person name="Ustaszewska A."/>
            <person name="Vo N."/>
            <person name="Wheeler J."/>
            <person name="Wu K."/>
            <person name="Yang J."/>
            <person name="Dickson M."/>
            <person name="Cheng J.-F."/>
            <person name="Eichler E.E."/>
            <person name="Olsen A."/>
            <person name="Pennacchio L.A."/>
            <person name="Rokhsar D.S."/>
            <person name="Richardson P."/>
            <person name="Lucas S.M."/>
            <person name="Myers R.M."/>
            <person name="Rubin E.M."/>
        </authorList>
    </citation>
    <scope>NUCLEOTIDE SEQUENCE [LARGE SCALE GENOMIC DNA]</scope>
</reference>
<reference key="4">
    <citation type="journal article" date="2004" name="Genome Res.">
        <title>The status, quality, and expansion of the NIH full-length cDNA project: the Mammalian Gene Collection (MGC).</title>
        <authorList>
            <consortium name="The MGC Project Team"/>
        </authorList>
    </citation>
    <scope>NUCLEOTIDE SEQUENCE [LARGE SCALE MRNA] OF 55-404 (ISOFORM 1)</scope>
</reference>
<reference key="5">
    <citation type="journal article" date="2004" name="Hum. Mol. Genet.">
        <title>Mutations in ichthyin a new gene on chromosome 5q33 in a new form of autosomal recessive congenital ichthyosis.</title>
        <authorList>
            <person name="Lefevre C."/>
            <person name="Bouadjar B."/>
            <person name="Karaduman A."/>
            <person name="Jobard F."/>
            <person name="Saker S."/>
            <person name="Ozguc M."/>
            <person name="Lathrop M."/>
            <person name="Prud'homme J.-F."/>
            <person name="Fischer J."/>
        </authorList>
    </citation>
    <scope>VARIANTS ARCI6 VAL-80; ASP-114; PHE-146; ASN-175 AND ARG-235</scope>
    <scope>FUNCTION</scope>
    <scope>TISSUE SPECIFICITY</scope>
</reference>
<reference key="6">
    <citation type="journal article" date="2016" name="Clin. Exp. Dermatol.">
        <title>Novel mutation in NIPAL4 in a Romanian family with autosomal recessive congenital ichthyosis.</title>
        <authorList>
            <person name="Maier D."/>
            <person name="Mazereeuw-Hautier J."/>
            <person name="Tilinca M."/>
            <person name="Cosgarea R."/>
            <person name="Jonca N."/>
        </authorList>
    </citation>
    <scope>VARIANT ARCI6 ARG-73</scope>
</reference>
<dbReference type="EMBL" id="EF599763">
    <property type="protein sequence ID" value="ABW69628.1"/>
    <property type="status" value="ALT_INIT"/>
    <property type="molecule type" value="Genomic_DNA"/>
</dbReference>
<dbReference type="EMBL" id="EF599764">
    <property type="protein sequence ID" value="ABW69629.1"/>
    <property type="status" value="ALT_INIT"/>
    <property type="molecule type" value="Genomic_DNA"/>
</dbReference>
<dbReference type="EMBL" id="EF599765">
    <property type="status" value="NOT_ANNOTATED_CDS"/>
    <property type="molecule type" value="Genomic_DNA"/>
</dbReference>
<dbReference type="EMBL" id="EF599766">
    <property type="protein sequence ID" value="ABW69630.1"/>
    <property type="status" value="ALT_SEQ"/>
    <property type="molecule type" value="Genomic_DNA"/>
</dbReference>
<dbReference type="EMBL" id="AK296972">
    <property type="protein sequence ID" value="BAG59515.1"/>
    <property type="status" value="ALT_INIT"/>
    <property type="molecule type" value="mRNA"/>
</dbReference>
<dbReference type="EMBL" id="AC008676">
    <property type="status" value="NOT_ANNOTATED_CDS"/>
    <property type="molecule type" value="Genomic_DNA"/>
</dbReference>
<dbReference type="EMBL" id="BC105708">
    <property type="protein sequence ID" value="AAI05709.1"/>
    <property type="molecule type" value="mRNA"/>
</dbReference>
<dbReference type="EMBL" id="BC105709">
    <property type="protein sequence ID" value="AAI05710.1"/>
    <property type="molecule type" value="mRNA"/>
</dbReference>
<dbReference type="EMBL" id="BC105710">
    <property type="protein sequence ID" value="AAI05711.1"/>
    <property type="molecule type" value="mRNA"/>
</dbReference>
<dbReference type="CCDS" id="CCDS47328.2">
    <molecule id="Q0D2K0-1"/>
</dbReference>
<dbReference type="CCDS" id="CCDS54944.1">
    <molecule id="Q0D2K0-2"/>
</dbReference>
<dbReference type="RefSeq" id="NP_001092757.2">
    <molecule id="Q0D2K0-1"/>
    <property type="nucleotide sequence ID" value="NM_001099287.2"/>
</dbReference>
<dbReference type="RefSeq" id="NP_001165763.2">
    <molecule id="Q0D2K0-2"/>
    <property type="nucleotide sequence ID" value="NM_001172292.2"/>
</dbReference>
<dbReference type="BioGRID" id="131541">
    <property type="interactions" value="22"/>
</dbReference>
<dbReference type="FunCoup" id="Q0D2K0">
    <property type="interactions" value="124"/>
</dbReference>
<dbReference type="IntAct" id="Q0D2K0">
    <property type="interactions" value="17"/>
</dbReference>
<dbReference type="STRING" id="9606.ENSP00000311687"/>
<dbReference type="TCDB" id="2.A.7.25.4">
    <property type="family name" value="the drug/metabolite transporter (dmt) superfamily"/>
</dbReference>
<dbReference type="GlyCosmos" id="Q0D2K0">
    <property type="glycosylation" value="3 sites, No reported glycans"/>
</dbReference>
<dbReference type="GlyGen" id="Q0D2K0">
    <property type="glycosylation" value="3 sites"/>
</dbReference>
<dbReference type="iPTMnet" id="Q0D2K0"/>
<dbReference type="PhosphoSitePlus" id="Q0D2K0"/>
<dbReference type="BioMuta" id="NIPAL4"/>
<dbReference type="DMDM" id="221222524"/>
<dbReference type="MassIVE" id="Q0D2K0"/>
<dbReference type="PaxDb" id="9606-ENSP00000311687"/>
<dbReference type="PeptideAtlas" id="Q0D2K0"/>
<dbReference type="ProteomicsDB" id="58743">
    <molecule id="Q0D2K0-1"/>
</dbReference>
<dbReference type="ProteomicsDB" id="58744">
    <molecule id="Q0D2K0-2"/>
</dbReference>
<dbReference type="Antibodypedia" id="48488">
    <property type="antibodies" value="70 antibodies from 15 providers"/>
</dbReference>
<dbReference type="DNASU" id="348938"/>
<dbReference type="Ensembl" id="ENST00000311946.8">
    <molecule id="Q0D2K0-1"/>
    <property type="protein sequence ID" value="ENSP00000311687.8"/>
    <property type="gene ID" value="ENSG00000172548.15"/>
</dbReference>
<dbReference type="Ensembl" id="ENST00000435489.7">
    <molecule id="Q0D2K0-2"/>
    <property type="protein sequence ID" value="ENSP00000406456.3"/>
    <property type="gene ID" value="ENSG00000172548.15"/>
</dbReference>
<dbReference type="GeneID" id="348938"/>
<dbReference type="KEGG" id="hsa:348938"/>
<dbReference type="MANE-Select" id="ENST00000311946.8">
    <property type="protein sequence ID" value="ENSP00000311687.8"/>
    <property type="RefSeq nucleotide sequence ID" value="NM_001099287.2"/>
    <property type="RefSeq protein sequence ID" value="NP_001092757.2"/>
</dbReference>
<dbReference type="UCSC" id="uc003lwx.5">
    <molecule id="Q0D2K0-1"/>
    <property type="organism name" value="human"/>
</dbReference>
<dbReference type="AGR" id="HGNC:28018"/>
<dbReference type="CTD" id="348938"/>
<dbReference type="DisGeNET" id="348938"/>
<dbReference type="GeneCards" id="NIPAL4"/>
<dbReference type="GeneReviews" id="NIPAL4"/>
<dbReference type="HGNC" id="HGNC:28018">
    <property type="gene designation" value="NIPAL4"/>
</dbReference>
<dbReference type="HPA" id="ENSG00000172548">
    <property type="expression patterns" value="Tissue enhanced (brain, skin)"/>
</dbReference>
<dbReference type="MalaCards" id="NIPAL4"/>
<dbReference type="MIM" id="609383">
    <property type="type" value="gene"/>
</dbReference>
<dbReference type="MIM" id="612281">
    <property type="type" value="phenotype"/>
</dbReference>
<dbReference type="neXtProt" id="NX_Q0D2K0"/>
<dbReference type="OpenTargets" id="ENSG00000172548"/>
<dbReference type="Orphanet" id="79394">
    <property type="disease" value="Congenital ichthyosiform erythroderma"/>
</dbReference>
<dbReference type="Orphanet" id="313">
    <property type="disease" value="Lamellar ichthyosis"/>
</dbReference>
<dbReference type="PharmGKB" id="PA164723956"/>
<dbReference type="VEuPathDB" id="HostDB:ENSG00000172548"/>
<dbReference type="eggNOG" id="KOG2922">
    <property type="taxonomic scope" value="Eukaryota"/>
</dbReference>
<dbReference type="GeneTree" id="ENSGT00940000159087"/>
<dbReference type="HOGENOM" id="CLU_012349_1_2_1"/>
<dbReference type="InParanoid" id="Q0D2K0"/>
<dbReference type="OrthoDB" id="6428174at2759"/>
<dbReference type="PAN-GO" id="Q0D2K0">
    <property type="GO annotations" value="2 GO annotations based on evolutionary models"/>
</dbReference>
<dbReference type="PhylomeDB" id="Q0D2K0"/>
<dbReference type="TreeFam" id="TF313214"/>
<dbReference type="PathwayCommons" id="Q0D2K0"/>
<dbReference type="Reactome" id="R-HSA-5223345">
    <property type="pathway name" value="Miscellaneous transport and binding events"/>
</dbReference>
<dbReference type="SignaLink" id="Q0D2K0"/>
<dbReference type="BioGRID-ORCS" id="348938">
    <property type="hits" value="8 hits in 1141 CRISPR screens"/>
</dbReference>
<dbReference type="GenomeRNAi" id="348938"/>
<dbReference type="Pharos" id="Q0D2K0">
    <property type="development level" value="Tbio"/>
</dbReference>
<dbReference type="PRO" id="PR:Q0D2K0"/>
<dbReference type="Proteomes" id="UP000005640">
    <property type="component" value="Chromosome 5"/>
</dbReference>
<dbReference type="RNAct" id="Q0D2K0">
    <property type="molecule type" value="protein"/>
</dbReference>
<dbReference type="Bgee" id="ENSG00000172548">
    <property type="expression patterns" value="Expressed in upper arm skin and 132 other cell types or tissues"/>
</dbReference>
<dbReference type="ExpressionAtlas" id="Q0D2K0">
    <property type="expression patterns" value="baseline and differential"/>
</dbReference>
<dbReference type="GO" id="GO:0016020">
    <property type="term" value="C:membrane"/>
    <property type="evidence" value="ECO:0000318"/>
    <property type="project" value="GO_Central"/>
</dbReference>
<dbReference type="GO" id="GO:0005886">
    <property type="term" value="C:plasma membrane"/>
    <property type="evidence" value="ECO:0007669"/>
    <property type="project" value="UniProtKB-SubCell"/>
</dbReference>
<dbReference type="GO" id="GO:0015095">
    <property type="term" value="F:magnesium ion transmembrane transporter activity"/>
    <property type="evidence" value="ECO:0007669"/>
    <property type="project" value="InterPro"/>
</dbReference>
<dbReference type="GO" id="GO:0015693">
    <property type="term" value="P:magnesium ion transport"/>
    <property type="evidence" value="ECO:0000318"/>
    <property type="project" value="GO_Central"/>
</dbReference>
<dbReference type="InterPro" id="IPR008521">
    <property type="entry name" value="Mg_trans_NIPA"/>
</dbReference>
<dbReference type="PANTHER" id="PTHR12570">
    <property type="match status" value="1"/>
</dbReference>
<dbReference type="PANTHER" id="PTHR12570:SF7">
    <property type="entry name" value="MAGNESIUM TRANSPORTER NIPA4"/>
    <property type="match status" value="1"/>
</dbReference>
<dbReference type="Pfam" id="PF05653">
    <property type="entry name" value="Mg_trans_NIPA"/>
    <property type="match status" value="1"/>
</dbReference>
<dbReference type="SUPFAM" id="SSF103481">
    <property type="entry name" value="Multidrug resistance efflux transporter EmrE"/>
    <property type="match status" value="1"/>
</dbReference>
<keyword id="KW-0025">Alternative splicing</keyword>
<keyword id="KW-1003">Cell membrane</keyword>
<keyword id="KW-0225">Disease variant</keyword>
<keyword id="KW-0325">Glycoprotein</keyword>
<keyword id="KW-0977">Ichthyosis</keyword>
<keyword id="KW-0406">Ion transport</keyword>
<keyword id="KW-0460">Magnesium</keyword>
<keyword id="KW-0472">Membrane</keyword>
<keyword id="KW-1267">Proteomics identification</keyword>
<keyword id="KW-0675">Receptor</keyword>
<keyword id="KW-1185">Reference proteome</keyword>
<keyword id="KW-0812">Transmembrane</keyword>
<keyword id="KW-1133">Transmembrane helix</keyword>
<keyword id="KW-0813">Transport</keyword>
<proteinExistence type="evidence at protein level"/>
<name>NIPA4_HUMAN</name>
<protein>
    <recommendedName>
        <fullName>Magnesium transporter NIPA4</fullName>
    </recommendedName>
    <alternativeName>
        <fullName>Ichthyin</fullName>
    </alternativeName>
    <alternativeName>
        <fullName>NIPA-like protein 4</fullName>
    </alternativeName>
    <alternativeName>
        <fullName>Non-imprinted in Prader-Willi/Angelman syndrome region protein 4</fullName>
    </alternativeName>
</protein>
<comment type="function">
    <text evidence="1 4">Acts as a Mg(2+) transporter. Can also transport other divalent cations such as Ba(2+), Sr(2+) and Fe(2+) but to a much less extent than Mg(2+) (By similarity). May be a receptor for ligands (trioxilins A3 and B3) from the hepoxilin pathway (PubMed:15317751).</text>
</comment>
<comment type="catalytic activity">
    <reaction evidence="1">
        <text>Mg(2+)(in) = Mg(2+)(out)</text>
        <dbReference type="Rhea" id="RHEA:29827"/>
        <dbReference type="ChEBI" id="CHEBI:18420"/>
    </reaction>
</comment>
<comment type="interaction">
    <interactant intactId="EBI-9550165">
        <id>Q0D2K0</id>
    </interactant>
    <interactant intactId="EBI-13379418">
        <id>O00590</id>
        <label>ACKR2</label>
    </interactant>
    <organismsDiffer>false</organismsDiffer>
    <experiments>3</experiments>
</comment>
<comment type="interaction">
    <interactant intactId="EBI-9550165">
        <id>Q0D2K0</id>
    </interactant>
    <interactant intactId="EBI-740744">
        <id>O95471</id>
        <label>CLDN7</label>
    </interactant>
    <organismsDiffer>false</organismsDiffer>
    <experiments>3</experiments>
</comment>
<comment type="interaction">
    <interactant intactId="EBI-9550165">
        <id>Q0D2K0</id>
    </interactant>
    <interactant intactId="EBI-2339374">
        <id>Q8TAZ6</id>
        <label>CMTM2</label>
    </interactant>
    <organismsDiffer>false</organismsDiffer>
    <experiments>3</experiments>
</comment>
<comment type="interaction">
    <interactant intactId="EBI-9550165">
        <id>Q0D2K0</id>
    </interactant>
    <interactant intactId="EBI-372265">
        <id>P21964</id>
        <label>COMT</label>
    </interactant>
    <organismsDiffer>false</organismsDiffer>
    <experiments>3</experiments>
</comment>
<comment type="interaction">
    <interactant intactId="EBI-9550165">
        <id>Q0D2K0</id>
    </interactant>
    <interactant intactId="EBI-2833872">
        <id>O15552</id>
        <label>FFAR2</label>
    </interactant>
    <organismsDiffer>false</organismsDiffer>
    <experiments>3</experiments>
</comment>
<comment type="interaction">
    <interactant intactId="EBI-9550165">
        <id>Q0D2K0</id>
    </interactant>
    <interactant intactId="EBI-17565645">
        <id>P08034</id>
        <label>GJB1</label>
    </interactant>
    <organismsDiffer>false</organismsDiffer>
    <experiments>3</experiments>
</comment>
<comment type="interaction">
    <interactant intactId="EBI-9550165">
        <id>Q0D2K0</id>
    </interactant>
    <interactant intactId="EBI-13345167">
        <id>Q8TDT2</id>
        <label>GPR152</label>
    </interactant>
    <organismsDiffer>false</organismsDiffer>
    <experiments>3</experiments>
</comment>
<comment type="interaction">
    <interactant intactId="EBI-9550165">
        <id>Q0D2K0</id>
    </interactant>
    <interactant intactId="EBI-2867874">
        <id>Q9UM44</id>
        <label>HHLA2</label>
    </interactant>
    <organismsDiffer>false</organismsDiffer>
    <experiments>3</experiments>
</comment>
<comment type="interaction">
    <interactant intactId="EBI-9550165">
        <id>Q0D2K0</id>
    </interactant>
    <interactant intactId="EBI-1031656">
        <id>Q13651</id>
        <label>IL10RA</label>
    </interactant>
    <organismsDiffer>false</organismsDiffer>
    <experiments>3</experiments>
</comment>
<comment type="interaction">
    <interactant intactId="EBI-9550165">
        <id>Q0D2K0</id>
    </interactant>
    <interactant intactId="EBI-2820517">
        <id>Q8TAF8</id>
        <label>LHFPL5</label>
    </interactant>
    <organismsDiffer>false</organismsDiffer>
    <experiments>3</experiments>
</comment>
<comment type="interaction">
    <interactant intactId="EBI-9550165">
        <id>Q0D2K0</id>
    </interactant>
    <interactant intactId="EBI-2340249">
        <id>Q96GF1</id>
        <label>RNF185</label>
    </interactant>
    <organismsDiffer>false</organismsDiffer>
    <experiments>3</experiments>
</comment>
<comment type="interaction">
    <interactant intactId="EBI-9550165">
        <id>Q0D2K0</id>
    </interactant>
    <interactant intactId="EBI-2466594">
        <id>Q6ZMZ0</id>
        <label>RNF19B</label>
    </interactant>
    <organismsDiffer>false</organismsDiffer>
    <experiments>3</experiments>
</comment>
<comment type="interaction">
    <interactant intactId="EBI-9550165">
        <id>Q0D2K0</id>
    </interactant>
    <interactant intactId="EBI-17280858">
        <id>Q8WWF3</id>
        <label>SSMEM1</label>
    </interactant>
    <organismsDiffer>false</organismsDiffer>
    <experiments>3</experiments>
</comment>
<comment type="interaction">
    <interactant intactId="EBI-9550165">
        <id>Q0D2K0</id>
    </interactant>
    <interactant intactId="EBI-13351685">
        <id>Q96CE8</id>
        <label>TM4SF18</label>
    </interactant>
    <organismsDiffer>false</organismsDiffer>
    <experiments>3</experiments>
</comment>
<comment type="interaction">
    <interactant intactId="EBI-9550165">
        <id>Q0D2K0</id>
    </interactant>
    <interactant intactId="EBI-18055230">
        <id>P34981</id>
        <label>TRHR</label>
    </interactant>
    <organismsDiffer>false</organismsDiffer>
    <experiments>3</experiments>
</comment>
<comment type="subcellular location">
    <subcellularLocation>
        <location evidence="2">Cell membrane</location>
        <topology evidence="3">Multi-pass membrane protein</topology>
    </subcellularLocation>
</comment>
<comment type="alternative products">
    <event type="alternative splicing"/>
    <isoform>
        <id>Q0D2K0-1</id>
        <name>1</name>
        <sequence type="displayed"/>
    </isoform>
    <isoform>
        <id>Q0D2K0-2</id>
        <name>2</name>
        <sequence type="described" ref="VSP_036122"/>
    </isoform>
</comment>
<comment type="tissue specificity">
    <text evidence="4 5">Highly expressed in brain, lung, stomach, keratinocytes and leukocytes, and in all other tissues tested except liver, thyroid and fetal brain.</text>
</comment>
<comment type="disease" evidence="4 5 6">
    <disease id="DI-00583">
        <name>Ichthyosis, congenital, autosomal recessive 6</name>
        <acronym>ARCI6</acronym>
        <description>A form of autosomal recessive congenital ichthyosis, a disorder of keratinization with abnormal differentiation and desquamation of the epidermis, resulting in abnormal skin scaling over the whole body. The main skin phenotypes are lamellar ichthyosis (LI) and non-bullous congenital ichthyosiform erythroderma (NCIE), although phenotypic overlap within the same patient or among patients from the same family can occur. Lamellar ichthyosis is a condition often associated with an embedment in a collodion-like membrane at birth; skin scales later develop, covering the entire body surface. Non-bullous congenital ichthyosiform erythroderma characterized by fine whitish scaling on an erythrodermal background; larger brownish scales are present on the buttocks, neck and legs.</description>
        <dbReference type="MIM" id="612281"/>
    </disease>
    <text>The disease is caused by variants affecting the gene represented in this entry.</text>
</comment>
<comment type="similarity">
    <text evidence="8">Belongs to the NIPA family.</text>
</comment>
<comment type="sequence caution" evidence="8">
    <conflict type="erroneous initiation">
        <sequence resource="EMBL-CDS" id="ABW69628"/>
    </conflict>
    <text>Extended N-terminus.</text>
</comment>
<comment type="sequence caution" evidence="8">
    <conflict type="erroneous initiation">
        <sequence resource="EMBL-CDS" id="ABW69629"/>
    </conflict>
    <text>Extended N-terminus.</text>
</comment>
<comment type="sequence caution" evidence="8">
    <conflict type="erroneous initiation">
        <sequence resource="EMBL-CDS" id="ABW69630"/>
    </conflict>
    <text>Extended N-terminus.</text>
</comment>
<comment type="sequence caution" evidence="8">
    <conflict type="miscellaneous discrepancy">
        <sequence resource="EMBL-CDS" id="ABW69630"/>
    </conflict>
    <text>Protein truncation is due to an exon 5 splice site mutation which is found in a ARCII patient.</text>
</comment>
<comment type="sequence caution" evidence="8">
    <conflict type="erroneous initiation">
        <sequence resource="EMBL-CDS" id="BAG59515"/>
    </conflict>
    <text>Extended N-terminus.</text>
</comment>
<organism>
    <name type="scientific">Homo sapiens</name>
    <name type="common">Human</name>
    <dbReference type="NCBI Taxonomy" id="9606"/>
    <lineage>
        <taxon>Eukaryota</taxon>
        <taxon>Metazoa</taxon>
        <taxon>Chordata</taxon>
        <taxon>Craniata</taxon>
        <taxon>Vertebrata</taxon>
        <taxon>Euteleostomi</taxon>
        <taxon>Mammalia</taxon>
        <taxon>Eutheria</taxon>
        <taxon>Euarchontoglires</taxon>
        <taxon>Primates</taxon>
        <taxon>Haplorrhini</taxon>
        <taxon>Catarrhini</taxon>
        <taxon>Hominidae</taxon>
        <taxon>Homo</taxon>
    </lineage>
</organism>
<sequence length="404" mass="44005">MELRVSNTSCENGSLLHLYCSSQEVLCQIVNDLSPEVPSNATFHSWQERIRQNYGFYIGLGLAFLSSFLIGSSVILKKKGLLRLVATGATRAVDGGFGYLKDAMWWAGFLTMAAGEVANFGAYAFAPATVVTPLGALSVLISAILSSYFLRESLNLLGKLGCVICVAGSTVMVIHAPEEEKVTTIMEMASKMKDTGFIVFAVLLLVSCLILIFVIAPRYGQRNILIYIIICSVIGAFSVAAVKGLGITIKNFFQGLPVVRHPLPYILSLILALSLSTQVNFLNRALDIFNTSLVFPIYYVFFTTVVVTSSIILFKEWYSMSAVDIAGTLSGFVTIILGVFMLHAFKDLDISCASLPHMHKNPPPSPAPEPTVIRLEDKNVLVDNIELASTSSPEEKPKVFIIHS</sequence>
<gene>
    <name type="primary">NIPAL4</name>
    <name type="synonym">ICHN</name>
    <name type="synonym">NIPA4</name>
</gene>
<accession>Q0D2K0</accession>
<accession>A8S6F1</accession>
<accession>A8S6F5</accession>
<accession>A8S6F8</accession>
<accession>B4DLF3</accession>
<accession>Q0D2J8</accession>
<accession>Q0D2J9</accession>
<feature type="chain" id="PRO_0000284447" description="Magnesium transporter NIPA4">
    <location>
        <begin position="1"/>
        <end position="404"/>
    </location>
</feature>
<feature type="topological domain" description="Extracellular" evidence="3">
    <location>
        <begin position="1"/>
        <end position="55"/>
    </location>
</feature>
<feature type="transmembrane region" description="Helical" evidence="3">
    <location>
        <begin position="56"/>
        <end position="76"/>
    </location>
</feature>
<feature type="topological domain" description="Cytoplasmic" evidence="3">
    <location>
        <begin position="77"/>
        <end position="102"/>
    </location>
</feature>
<feature type="transmembrane region" description="Helical" evidence="3">
    <location>
        <begin position="103"/>
        <end position="123"/>
    </location>
</feature>
<feature type="topological domain" description="Extracellular" evidence="3">
    <location>
        <position position="124"/>
    </location>
</feature>
<feature type="transmembrane region" description="Helical" evidence="3">
    <location>
        <begin position="125"/>
        <end position="145"/>
    </location>
</feature>
<feature type="topological domain" description="Cytoplasmic" evidence="3">
    <location>
        <begin position="146"/>
        <end position="153"/>
    </location>
</feature>
<feature type="transmembrane region" description="Helical" evidence="3">
    <location>
        <begin position="154"/>
        <end position="174"/>
    </location>
</feature>
<feature type="topological domain" description="Extracellular" evidence="3">
    <location>
        <begin position="175"/>
        <end position="195"/>
    </location>
</feature>
<feature type="transmembrane region" description="Helical" evidence="3">
    <location>
        <begin position="196"/>
        <end position="216"/>
    </location>
</feature>
<feature type="topological domain" description="Cytoplasmic" evidence="3">
    <location>
        <begin position="217"/>
        <end position="223"/>
    </location>
</feature>
<feature type="transmembrane region" description="Helical" evidence="3">
    <location>
        <begin position="224"/>
        <end position="244"/>
    </location>
</feature>
<feature type="topological domain" description="Extracellular" evidence="3">
    <location>
        <begin position="245"/>
        <end position="261"/>
    </location>
</feature>
<feature type="transmembrane region" description="Helical" evidence="3">
    <location>
        <begin position="262"/>
        <end position="282"/>
    </location>
</feature>
<feature type="topological domain" description="Cytoplasmic" evidence="3">
    <location>
        <begin position="283"/>
        <end position="293"/>
    </location>
</feature>
<feature type="transmembrane region" description="Helical" evidence="3">
    <location>
        <begin position="294"/>
        <end position="314"/>
    </location>
</feature>
<feature type="topological domain" description="Extracellular" evidence="3">
    <location>
        <begin position="315"/>
        <end position="324"/>
    </location>
</feature>
<feature type="transmembrane region" description="Helical" evidence="3">
    <location>
        <begin position="325"/>
        <end position="345"/>
    </location>
</feature>
<feature type="topological domain" description="Cytoplasmic" evidence="3">
    <location>
        <begin position="346"/>
        <end position="404"/>
    </location>
</feature>
<feature type="glycosylation site" description="N-linked (GlcNAc...) asparagine" evidence="3">
    <location>
        <position position="7"/>
    </location>
</feature>
<feature type="glycosylation site" description="N-linked (GlcNAc...) asparagine" evidence="3">
    <location>
        <position position="12"/>
    </location>
</feature>
<feature type="glycosylation site" description="N-linked (GlcNAc...) asparagine" evidence="3">
    <location>
        <position position="40"/>
    </location>
</feature>
<feature type="splice variant" id="VSP_036122" description="In isoform 2." evidence="7">
    <location>
        <begin position="94"/>
        <end position="112"/>
    </location>
</feature>
<feature type="sequence variant" id="VAR_075461" description="In ARCI6; dbSNP:rs376803325." evidence="6">
    <original>S</original>
    <variation>R</variation>
    <location>
        <position position="73"/>
    </location>
</feature>
<feature type="sequence variant" id="VAR_031736" description="In ARCI6; dbSNP:rs775903553." evidence="4">
    <original>G</original>
    <variation>V</variation>
    <location>
        <position position="80"/>
    </location>
</feature>
<feature type="sequence variant" id="VAR_031737" description="In ARCI6; frequent mutation; dbSNP:rs199422217." evidence="4 5">
    <original>A</original>
    <variation>D</variation>
    <location>
        <position position="114"/>
    </location>
</feature>
<feature type="sequence variant" id="VAR_031738" description="In ARCI6; dbSNP:rs1581271869." evidence="4">
    <original>S</original>
    <variation>F</variation>
    <location>
        <position position="146"/>
    </location>
</feature>
<feature type="sequence variant" id="VAR_054120" description="In ARCI6; dbSNP:rs370356566." evidence="5">
    <original>G</original>
    <variation>R</variation>
    <location>
        <position position="168"/>
    </location>
</feature>
<feature type="sequence variant" id="VAR_031739" description="In ARCI6." evidence="4">
    <original>H</original>
    <variation>N</variation>
    <location>
        <position position="175"/>
    </location>
</feature>
<feature type="sequence variant" id="VAR_031740" description="In ARCI6; dbSNP:rs375688767." evidence="4">
    <original>G</original>
    <variation>R</variation>
    <location>
        <position position="235"/>
    </location>
</feature>
<feature type="sequence conflict" description="In Ref. 2; BAG59515 and 4; AAI05711." evidence="8" ref="2 4">
    <original>R</original>
    <variation>G</variation>
    <location>
        <position position="151"/>
    </location>
</feature>
<evidence type="ECO:0000250" key="1">
    <source>
        <dbReference type="UniProtKB" id="Q8BZF2"/>
    </source>
</evidence>
<evidence type="ECO:0000250" key="2">
    <source>
        <dbReference type="UniProtKB" id="Q9JJC8"/>
    </source>
</evidence>
<evidence type="ECO:0000255" key="3"/>
<evidence type="ECO:0000269" key="4">
    <source>
    </source>
</evidence>
<evidence type="ECO:0000269" key="5">
    <source>
    </source>
</evidence>
<evidence type="ECO:0000269" key="6">
    <source>
    </source>
</evidence>
<evidence type="ECO:0000303" key="7">
    <source>
    </source>
</evidence>
<evidence type="ECO:0000305" key="8"/>